<organism>
    <name type="scientific">Bacteroides fragilis (strain YCH46)</name>
    <dbReference type="NCBI Taxonomy" id="295405"/>
    <lineage>
        <taxon>Bacteria</taxon>
        <taxon>Pseudomonadati</taxon>
        <taxon>Bacteroidota</taxon>
        <taxon>Bacteroidia</taxon>
        <taxon>Bacteroidales</taxon>
        <taxon>Bacteroidaceae</taxon>
        <taxon>Bacteroides</taxon>
    </lineage>
</organism>
<proteinExistence type="inferred from homology"/>
<reference key="1">
    <citation type="journal article" date="2004" name="Proc. Natl. Acad. Sci. U.S.A.">
        <title>Genomic analysis of Bacteroides fragilis reveals extensive DNA inversions regulating cell surface adaptation.</title>
        <authorList>
            <person name="Kuwahara T."/>
            <person name="Yamashita A."/>
            <person name="Hirakawa H."/>
            <person name="Nakayama H."/>
            <person name="Toh H."/>
            <person name="Okada N."/>
            <person name="Kuhara S."/>
            <person name="Hattori M."/>
            <person name="Hayashi T."/>
            <person name="Ohnishi Y."/>
        </authorList>
    </citation>
    <scope>NUCLEOTIDE SEQUENCE [LARGE SCALE GENOMIC DNA]</scope>
    <source>
        <strain>YCH46</strain>
    </source>
</reference>
<name>THIE_BACFR</name>
<protein>
    <recommendedName>
        <fullName evidence="1">Thiamine-phosphate synthase</fullName>
        <shortName evidence="1">TP synthase</shortName>
        <shortName evidence="1">TPS</shortName>
        <ecNumber evidence="1">2.5.1.3</ecNumber>
    </recommendedName>
    <alternativeName>
        <fullName evidence="1">Thiamine-phosphate pyrophosphorylase</fullName>
        <shortName evidence="1">TMP pyrophosphorylase</shortName>
        <shortName evidence="1">TMP-PPase</shortName>
    </alternativeName>
</protein>
<sequence length="204" mass="22090">MLSLQFITHQTENYSYLESARMALEGGCKWIQLRMKEASPEEVEAVALQLKPLCKAKEAILILDDHVELAKKLEVDGVHLGKKDMPIGEARQMLGEAFIIGGTANTFEDVKLHHAAGADYLGIGPFRFTTTKINLSPVLGLEGYTSILAQMNEADIRIPVVAIGGIVAEDIPAIMETGVNGIALSGAILQAPDPVEETKRILNI</sequence>
<feature type="chain" id="PRO_1000008126" description="Thiamine-phosphate synthase">
    <location>
        <begin position="1"/>
        <end position="204"/>
    </location>
</feature>
<feature type="binding site" evidence="1">
    <location>
        <begin position="32"/>
        <end position="36"/>
    </location>
    <ligand>
        <name>4-amino-2-methyl-5-(diphosphooxymethyl)pyrimidine</name>
        <dbReference type="ChEBI" id="CHEBI:57841"/>
    </ligand>
</feature>
<feature type="binding site" evidence="1">
    <location>
        <position position="64"/>
    </location>
    <ligand>
        <name>4-amino-2-methyl-5-(diphosphooxymethyl)pyrimidine</name>
        <dbReference type="ChEBI" id="CHEBI:57841"/>
    </ligand>
</feature>
<feature type="binding site" evidence="1">
    <location>
        <position position="65"/>
    </location>
    <ligand>
        <name>Mg(2+)</name>
        <dbReference type="ChEBI" id="CHEBI:18420"/>
    </ligand>
</feature>
<feature type="binding site" evidence="1">
    <location>
        <position position="84"/>
    </location>
    <ligand>
        <name>Mg(2+)</name>
        <dbReference type="ChEBI" id="CHEBI:18420"/>
    </ligand>
</feature>
<feature type="binding site" evidence="1">
    <location>
        <position position="103"/>
    </location>
    <ligand>
        <name>4-amino-2-methyl-5-(diphosphooxymethyl)pyrimidine</name>
        <dbReference type="ChEBI" id="CHEBI:57841"/>
    </ligand>
</feature>
<feature type="binding site" evidence="1">
    <location>
        <begin position="129"/>
        <end position="131"/>
    </location>
    <ligand>
        <name>2-[(2R,5Z)-2-carboxy-4-methylthiazol-5(2H)-ylidene]ethyl phosphate</name>
        <dbReference type="ChEBI" id="CHEBI:62899"/>
    </ligand>
</feature>
<feature type="binding site" evidence="1">
    <location>
        <position position="132"/>
    </location>
    <ligand>
        <name>4-amino-2-methyl-5-(diphosphooxymethyl)pyrimidine</name>
        <dbReference type="ChEBI" id="CHEBI:57841"/>
    </ligand>
</feature>
<feature type="binding site" evidence="1">
    <location>
        <position position="165"/>
    </location>
    <ligand>
        <name>2-[(2R,5Z)-2-carboxy-4-methylthiazol-5(2H)-ylidene]ethyl phosphate</name>
        <dbReference type="ChEBI" id="CHEBI:62899"/>
    </ligand>
</feature>
<comment type="function">
    <text evidence="1">Condenses 4-methyl-5-(beta-hydroxyethyl)thiazole monophosphate (THZ-P) and 2-methyl-4-amino-5-hydroxymethyl pyrimidine pyrophosphate (HMP-PP) to form thiamine monophosphate (TMP).</text>
</comment>
<comment type="catalytic activity">
    <reaction evidence="1">
        <text>2-[(2R,5Z)-2-carboxy-4-methylthiazol-5(2H)-ylidene]ethyl phosphate + 4-amino-2-methyl-5-(diphosphooxymethyl)pyrimidine + 2 H(+) = thiamine phosphate + CO2 + diphosphate</text>
        <dbReference type="Rhea" id="RHEA:47844"/>
        <dbReference type="ChEBI" id="CHEBI:15378"/>
        <dbReference type="ChEBI" id="CHEBI:16526"/>
        <dbReference type="ChEBI" id="CHEBI:33019"/>
        <dbReference type="ChEBI" id="CHEBI:37575"/>
        <dbReference type="ChEBI" id="CHEBI:57841"/>
        <dbReference type="ChEBI" id="CHEBI:62899"/>
        <dbReference type="EC" id="2.5.1.3"/>
    </reaction>
</comment>
<comment type="catalytic activity">
    <reaction evidence="1">
        <text>2-(2-carboxy-4-methylthiazol-5-yl)ethyl phosphate + 4-amino-2-methyl-5-(diphosphooxymethyl)pyrimidine + 2 H(+) = thiamine phosphate + CO2 + diphosphate</text>
        <dbReference type="Rhea" id="RHEA:47848"/>
        <dbReference type="ChEBI" id="CHEBI:15378"/>
        <dbReference type="ChEBI" id="CHEBI:16526"/>
        <dbReference type="ChEBI" id="CHEBI:33019"/>
        <dbReference type="ChEBI" id="CHEBI:37575"/>
        <dbReference type="ChEBI" id="CHEBI:57841"/>
        <dbReference type="ChEBI" id="CHEBI:62890"/>
        <dbReference type="EC" id="2.5.1.3"/>
    </reaction>
</comment>
<comment type="catalytic activity">
    <reaction evidence="1">
        <text>4-methyl-5-(2-phosphooxyethyl)-thiazole + 4-amino-2-methyl-5-(diphosphooxymethyl)pyrimidine + H(+) = thiamine phosphate + diphosphate</text>
        <dbReference type="Rhea" id="RHEA:22328"/>
        <dbReference type="ChEBI" id="CHEBI:15378"/>
        <dbReference type="ChEBI" id="CHEBI:33019"/>
        <dbReference type="ChEBI" id="CHEBI:37575"/>
        <dbReference type="ChEBI" id="CHEBI:57841"/>
        <dbReference type="ChEBI" id="CHEBI:58296"/>
        <dbReference type="EC" id="2.5.1.3"/>
    </reaction>
</comment>
<comment type="cofactor">
    <cofactor evidence="1">
        <name>Mg(2+)</name>
        <dbReference type="ChEBI" id="CHEBI:18420"/>
    </cofactor>
    <text evidence="1">Binds 1 Mg(2+) ion per subunit.</text>
</comment>
<comment type="pathway">
    <text evidence="1">Cofactor biosynthesis; thiamine diphosphate biosynthesis; thiamine phosphate from 4-amino-2-methyl-5-diphosphomethylpyrimidine and 4-methyl-5-(2-phosphoethyl)-thiazole: step 1/1.</text>
</comment>
<comment type="similarity">
    <text evidence="1">Belongs to the thiamine-phosphate synthase family.</text>
</comment>
<keyword id="KW-0460">Magnesium</keyword>
<keyword id="KW-0479">Metal-binding</keyword>
<keyword id="KW-0784">Thiamine biosynthesis</keyword>
<keyword id="KW-0808">Transferase</keyword>
<dbReference type="EC" id="2.5.1.3" evidence="1"/>
<dbReference type="EMBL" id="AP006841">
    <property type="protein sequence ID" value="BAD49278.1"/>
    <property type="molecule type" value="Genomic_DNA"/>
</dbReference>
<dbReference type="RefSeq" id="WP_008768961.1">
    <property type="nucleotide sequence ID" value="NC_006347.1"/>
</dbReference>
<dbReference type="RefSeq" id="YP_099812.1">
    <property type="nucleotide sequence ID" value="NC_006347.1"/>
</dbReference>
<dbReference type="SMR" id="Q64TA1"/>
<dbReference type="STRING" id="295405.BF2529"/>
<dbReference type="KEGG" id="bfr:BF2529"/>
<dbReference type="PATRIC" id="fig|295405.11.peg.2435"/>
<dbReference type="HOGENOM" id="CLU_018272_3_2_10"/>
<dbReference type="OrthoDB" id="9812206at2"/>
<dbReference type="UniPathway" id="UPA00060">
    <property type="reaction ID" value="UER00141"/>
</dbReference>
<dbReference type="Proteomes" id="UP000002197">
    <property type="component" value="Chromosome"/>
</dbReference>
<dbReference type="GO" id="GO:0005737">
    <property type="term" value="C:cytoplasm"/>
    <property type="evidence" value="ECO:0007669"/>
    <property type="project" value="TreeGrafter"/>
</dbReference>
<dbReference type="GO" id="GO:0000287">
    <property type="term" value="F:magnesium ion binding"/>
    <property type="evidence" value="ECO:0007669"/>
    <property type="project" value="UniProtKB-UniRule"/>
</dbReference>
<dbReference type="GO" id="GO:0004789">
    <property type="term" value="F:thiamine-phosphate diphosphorylase activity"/>
    <property type="evidence" value="ECO:0007669"/>
    <property type="project" value="UniProtKB-UniRule"/>
</dbReference>
<dbReference type="GO" id="GO:0009228">
    <property type="term" value="P:thiamine biosynthetic process"/>
    <property type="evidence" value="ECO:0007669"/>
    <property type="project" value="UniProtKB-KW"/>
</dbReference>
<dbReference type="GO" id="GO:0009229">
    <property type="term" value="P:thiamine diphosphate biosynthetic process"/>
    <property type="evidence" value="ECO:0007669"/>
    <property type="project" value="UniProtKB-UniRule"/>
</dbReference>
<dbReference type="CDD" id="cd00564">
    <property type="entry name" value="TMP_TenI"/>
    <property type="match status" value="1"/>
</dbReference>
<dbReference type="Gene3D" id="3.20.20.70">
    <property type="entry name" value="Aldolase class I"/>
    <property type="match status" value="1"/>
</dbReference>
<dbReference type="HAMAP" id="MF_00097">
    <property type="entry name" value="TMP_synthase"/>
    <property type="match status" value="1"/>
</dbReference>
<dbReference type="InterPro" id="IPR013785">
    <property type="entry name" value="Aldolase_TIM"/>
</dbReference>
<dbReference type="InterPro" id="IPR036206">
    <property type="entry name" value="ThiamineP_synth_sf"/>
</dbReference>
<dbReference type="InterPro" id="IPR022998">
    <property type="entry name" value="ThiamineP_synth_TenI"/>
</dbReference>
<dbReference type="InterPro" id="IPR034291">
    <property type="entry name" value="TMP_synthase"/>
</dbReference>
<dbReference type="NCBIfam" id="NF000736">
    <property type="entry name" value="PRK00043.2-3"/>
    <property type="match status" value="1"/>
</dbReference>
<dbReference type="NCBIfam" id="TIGR00693">
    <property type="entry name" value="thiE"/>
    <property type="match status" value="1"/>
</dbReference>
<dbReference type="PANTHER" id="PTHR20857">
    <property type="entry name" value="THIAMINE-PHOSPHATE PYROPHOSPHORYLASE"/>
    <property type="match status" value="1"/>
</dbReference>
<dbReference type="PANTHER" id="PTHR20857:SF15">
    <property type="entry name" value="THIAMINE-PHOSPHATE SYNTHASE"/>
    <property type="match status" value="1"/>
</dbReference>
<dbReference type="Pfam" id="PF02581">
    <property type="entry name" value="TMP-TENI"/>
    <property type="match status" value="1"/>
</dbReference>
<dbReference type="SUPFAM" id="SSF51391">
    <property type="entry name" value="Thiamin phosphate synthase"/>
    <property type="match status" value="1"/>
</dbReference>
<accession>Q64TA1</accession>
<gene>
    <name evidence="1" type="primary">thiE</name>
    <name type="ordered locus">BF2529</name>
</gene>
<evidence type="ECO:0000255" key="1">
    <source>
        <dbReference type="HAMAP-Rule" id="MF_00097"/>
    </source>
</evidence>